<sequence length="454" mass="51065">MMTDSMRLVWEKAKEAIRSQVPDQGYLMWIDPLRVVKAAADSVVLGCPNPLAKKWLMDHYRGLLESAMQQAAQRPLKVLLEVAECVAEAPETPEEAPQQLCLPAFADIPRPSSGRLLNRDFTFDSFVVGDCNDFAYSAALSVASKRSKLHAPLYLLAQTGLGKSHLSQAVGRQVMQESPEERVFYITAEDFTNEMIGALNTGTISSFKEKYRRNCDTLILEDVHFLSGKNRTQDELAFTLDSLMETNKRLVFTSAYLPSEIPKMHDSMRSRLNAGVISSLEAPDFRMRMRILQRKANSAKIALPMDVAEFMASELTGDIRHLESGIKGLAARNSIMGRGIDLKMAREVVGNIVRNRKALTLGVITKMVCKYYRVTEEDLRSRSRKQAIARPRQVAMYLGRRYTDQSLQAIGRTFNRYHATALHAVGVVERHIRENGDMREPVLFLCGKIEAGEF</sequence>
<dbReference type="EMBL" id="CP001322">
    <property type="protein sequence ID" value="ACL01712.1"/>
    <property type="molecule type" value="Genomic_DNA"/>
</dbReference>
<dbReference type="RefSeq" id="WP_012609152.1">
    <property type="nucleotide sequence ID" value="NC_011768.1"/>
</dbReference>
<dbReference type="SMR" id="B8FFL8"/>
<dbReference type="KEGG" id="dal:Dalk_0002"/>
<dbReference type="eggNOG" id="COG0593">
    <property type="taxonomic scope" value="Bacteria"/>
</dbReference>
<dbReference type="HOGENOM" id="CLU_026910_3_0_7"/>
<dbReference type="Proteomes" id="UP000000739">
    <property type="component" value="Chromosome"/>
</dbReference>
<dbReference type="GO" id="GO:0005737">
    <property type="term" value="C:cytoplasm"/>
    <property type="evidence" value="ECO:0007669"/>
    <property type="project" value="UniProtKB-SubCell"/>
</dbReference>
<dbReference type="GO" id="GO:0005886">
    <property type="term" value="C:plasma membrane"/>
    <property type="evidence" value="ECO:0007669"/>
    <property type="project" value="TreeGrafter"/>
</dbReference>
<dbReference type="GO" id="GO:0005524">
    <property type="term" value="F:ATP binding"/>
    <property type="evidence" value="ECO:0007669"/>
    <property type="project" value="UniProtKB-UniRule"/>
</dbReference>
<dbReference type="GO" id="GO:0003688">
    <property type="term" value="F:DNA replication origin binding"/>
    <property type="evidence" value="ECO:0007669"/>
    <property type="project" value="UniProtKB-UniRule"/>
</dbReference>
<dbReference type="GO" id="GO:0008289">
    <property type="term" value="F:lipid binding"/>
    <property type="evidence" value="ECO:0007669"/>
    <property type="project" value="UniProtKB-KW"/>
</dbReference>
<dbReference type="GO" id="GO:0006270">
    <property type="term" value="P:DNA replication initiation"/>
    <property type="evidence" value="ECO:0007669"/>
    <property type="project" value="UniProtKB-UniRule"/>
</dbReference>
<dbReference type="GO" id="GO:0006275">
    <property type="term" value="P:regulation of DNA replication"/>
    <property type="evidence" value="ECO:0007669"/>
    <property type="project" value="UniProtKB-UniRule"/>
</dbReference>
<dbReference type="CDD" id="cd00009">
    <property type="entry name" value="AAA"/>
    <property type="match status" value="1"/>
</dbReference>
<dbReference type="CDD" id="cd06571">
    <property type="entry name" value="Bac_DnaA_C"/>
    <property type="match status" value="1"/>
</dbReference>
<dbReference type="Gene3D" id="1.10.1750.10">
    <property type="match status" value="1"/>
</dbReference>
<dbReference type="Gene3D" id="1.10.8.60">
    <property type="match status" value="1"/>
</dbReference>
<dbReference type="Gene3D" id="3.30.300.180">
    <property type="match status" value="1"/>
</dbReference>
<dbReference type="Gene3D" id="3.40.50.300">
    <property type="entry name" value="P-loop containing nucleotide triphosphate hydrolases"/>
    <property type="match status" value="1"/>
</dbReference>
<dbReference type="HAMAP" id="MF_00377">
    <property type="entry name" value="DnaA_bact"/>
    <property type="match status" value="1"/>
</dbReference>
<dbReference type="InterPro" id="IPR001957">
    <property type="entry name" value="Chromosome_initiator_DnaA"/>
</dbReference>
<dbReference type="InterPro" id="IPR020591">
    <property type="entry name" value="Chromosome_initiator_DnaA-like"/>
</dbReference>
<dbReference type="InterPro" id="IPR013159">
    <property type="entry name" value="DnaA_C"/>
</dbReference>
<dbReference type="InterPro" id="IPR013317">
    <property type="entry name" value="DnaA_dom"/>
</dbReference>
<dbReference type="InterPro" id="IPR024633">
    <property type="entry name" value="DnaA_N_dom"/>
</dbReference>
<dbReference type="InterPro" id="IPR038454">
    <property type="entry name" value="DnaA_N_sf"/>
</dbReference>
<dbReference type="InterPro" id="IPR027417">
    <property type="entry name" value="P-loop_NTPase"/>
</dbReference>
<dbReference type="InterPro" id="IPR010921">
    <property type="entry name" value="Trp_repressor/repl_initiator"/>
</dbReference>
<dbReference type="NCBIfam" id="TIGR00362">
    <property type="entry name" value="DnaA"/>
    <property type="match status" value="1"/>
</dbReference>
<dbReference type="PANTHER" id="PTHR30050">
    <property type="entry name" value="CHROMOSOMAL REPLICATION INITIATOR PROTEIN DNAA"/>
    <property type="match status" value="1"/>
</dbReference>
<dbReference type="PANTHER" id="PTHR30050:SF2">
    <property type="entry name" value="CHROMOSOMAL REPLICATION INITIATOR PROTEIN DNAA"/>
    <property type="match status" value="1"/>
</dbReference>
<dbReference type="Pfam" id="PF00308">
    <property type="entry name" value="Bac_DnaA"/>
    <property type="match status" value="1"/>
</dbReference>
<dbReference type="Pfam" id="PF08299">
    <property type="entry name" value="Bac_DnaA_C"/>
    <property type="match status" value="1"/>
</dbReference>
<dbReference type="Pfam" id="PF11638">
    <property type="entry name" value="DnaA_N"/>
    <property type="match status" value="1"/>
</dbReference>
<dbReference type="PRINTS" id="PR00051">
    <property type="entry name" value="DNAA"/>
</dbReference>
<dbReference type="SMART" id="SM00760">
    <property type="entry name" value="Bac_DnaA_C"/>
    <property type="match status" value="1"/>
</dbReference>
<dbReference type="SUPFAM" id="SSF52540">
    <property type="entry name" value="P-loop containing nucleoside triphosphate hydrolases"/>
    <property type="match status" value="1"/>
</dbReference>
<dbReference type="SUPFAM" id="SSF48295">
    <property type="entry name" value="TrpR-like"/>
    <property type="match status" value="1"/>
</dbReference>
<protein>
    <recommendedName>
        <fullName evidence="1">Chromosomal replication initiator protein DnaA</fullName>
    </recommendedName>
</protein>
<accession>B8FFL8</accession>
<proteinExistence type="inferred from homology"/>
<gene>
    <name evidence="1" type="primary">dnaA</name>
    <name type="ordered locus">Dalk_0002</name>
</gene>
<organism>
    <name type="scientific">Desulfatibacillum aliphaticivorans</name>
    <dbReference type="NCBI Taxonomy" id="218208"/>
    <lineage>
        <taxon>Bacteria</taxon>
        <taxon>Pseudomonadati</taxon>
        <taxon>Thermodesulfobacteriota</taxon>
        <taxon>Desulfobacteria</taxon>
        <taxon>Desulfobacterales</taxon>
        <taxon>Desulfatibacillaceae</taxon>
        <taxon>Desulfatibacillum</taxon>
    </lineage>
</organism>
<feature type="chain" id="PRO_1000121971" description="Chromosomal replication initiator protein DnaA">
    <location>
        <begin position="1"/>
        <end position="454"/>
    </location>
</feature>
<feature type="region of interest" description="Domain I, interacts with DnaA modulators" evidence="1">
    <location>
        <begin position="1"/>
        <end position="83"/>
    </location>
</feature>
<feature type="region of interest" description="Domain II" evidence="1">
    <location>
        <begin position="83"/>
        <end position="115"/>
    </location>
</feature>
<feature type="region of interest" description="Domain III, AAA+ region" evidence="1">
    <location>
        <begin position="116"/>
        <end position="333"/>
    </location>
</feature>
<feature type="region of interest" description="Domain IV, binds dsDNA" evidence="1">
    <location>
        <begin position="334"/>
        <end position="454"/>
    </location>
</feature>
<feature type="binding site" evidence="1">
    <location>
        <position position="160"/>
    </location>
    <ligand>
        <name>ATP</name>
        <dbReference type="ChEBI" id="CHEBI:30616"/>
    </ligand>
</feature>
<feature type="binding site" evidence="1">
    <location>
        <position position="162"/>
    </location>
    <ligand>
        <name>ATP</name>
        <dbReference type="ChEBI" id="CHEBI:30616"/>
    </ligand>
</feature>
<feature type="binding site" evidence="1">
    <location>
        <position position="163"/>
    </location>
    <ligand>
        <name>ATP</name>
        <dbReference type="ChEBI" id="CHEBI:30616"/>
    </ligand>
</feature>
<feature type="binding site" evidence="1">
    <location>
        <position position="164"/>
    </location>
    <ligand>
        <name>ATP</name>
        <dbReference type="ChEBI" id="CHEBI:30616"/>
    </ligand>
</feature>
<name>DNAA_DESAL</name>
<reference key="1">
    <citation type="journal article" date="2012" name="Environ. Microbiol.">
        <title>The genome sequence of Desulfatibacillum alkenivorans AK-01: a blueprint for anaerobic alkane oxidation.</title>
        <authorList>
            <person name="Callaghan A.V."/>
            <person name="Morris B.E."/>
            <person name="Pereira I.A."/>
            <person name="McInerney M.J."/>
            <person name="Austin R.N."/>
            <person name="Groves J.T."/>
            <person name="Kukor J.J."/>
            <person name="Suflita J.M."/>
            <person name="Young L.Y."/>
            <person name="Zylstra G.J."/>
            <person name="Wawrik B."/>
        </authorList>
    </citation>
    <scope>NUCLEOTIDE SEQUENCE [LARGE SCALE GENOMIC DNA]</scope>
    <source>
        <strain>AK-01</strain>
    </source>
</reference>
<comment type="function">
    <text evidence="1">Plays an essential role in the initiation and regulation of chromosomal replication. ATP-DnaA binds to the origin of replication (oriC) to initiate formation of the DNA replication initiation complex once per cell cycle. Binds the DnaA box (a 9 base pair repeat at the origin) and separates the double-stranded (ds)DNA. Forms a right-handed helical filament on oriC DNA; dsDNA binds to the exterior of the filament while single-stranded (ss)DNA is stabiized in the filament's interior. The ATP-DnaA-oriC complex binds and stabilizes one strand of the AT-rich DNA unwinding element (DUE), permitting loading of DNA polymerase. After initiation quickly degrades to an ADP-DnaA complex that is not apt for DNA replication. Binds acidic phospholipids.</text>
</comment>
<comment type="subunit">
    <text evidence="1">Oligomerizes as a right-handed, spiral filament on DNA at oriC.</text>
</comment>
<comment type="subcellular location">
    <subcellularLocation>
        <location evidence="1">Cytoplasm</location>
    </subcellularLocation>
</comment>
<comment type="domain">
    <text evidence="1">Domain I is involved in oligomerization and binding regulators, domain II is flexibile and of varying length in different bacteria, domain III forms the AAA+ region, while domain IV binds dsDNA.</text>
</comment>
<comment type="similarity">
    <text evidence="1">Belongs to the DnaA family.</text>
</comment>
<evidence type="ECO:0000255" key="1">
    <source>
        <dbReference type="HAMAP-Rule" id="MF_00377"/>
    </source>
</evidence>
<keyword id="KW-0067">ATP-binding</keyword>
<keyword id="KW-0963">Cytoplasm</keyword>
<keyword id="KW-0235">DNA replication</keyword>
<keyword id="KW-0238">DNA-binding</keyword>
<keyword id="KW-0446">Lipid-binding</keyword>
<keyword id="KW-0547">Nucleotide-binding</keyword>
<keyword id="KW-1185">Reference proteome</keyword>